<accession>B5YIB7</accession>
<organism>
    <name type="scientific">Thermodesulfovibrio yellowstonii (strain ATCC 51303 / DSM 11347 / YP87)</name>
    <dbReference type="NCBI Taxonomy" id="289376"/>
    <lineage>
        <taxon>Bacteria</taxon>
        <taxon>Pseudomonadati</taxon>
        <taxon>Nitrospirota</taxon>
        <taxon>Thermodesulfovibrionia</taxon>
        <taxon>Thermodesulfovibrionales</taxon>
        <taxon>Thermodesulfovibrionaceae</taxon>
        <taxon>Thermodesulfovibrio</taxon>
    </lineage>
</organism>
<name>HIS6_THEYD</name>
<feature type="chain" id="PRO_1000135056" description="Imidazole glycerol phosphate synthase subunit HisF">
    <location>
        <begin position="1"/>
        <end position="278"/>
    </location>
</feature>
<feature type="active site" evidence="1">
    <location>
        <position position="11"/>
    </location>
</feature>
<feature type="active site" evidence="1">
    <location>
        <position position="130"/>
    </location>
</feature>
<comment type="function">
    <text evidence="1">IGPS catalyzes the conversion of PRFAR and glutamine to IGP, AICAR and glutamate. The HisF subunit catalyzes the cyclization activity that produces IGP and AICAR from PRFAR using the ammonia provided by the HisH subunit.</text>
</comment>
<comment type="catalytic activity">
    <reaction evidence="1">
        <text>5-[(5-phospho-1-deoxy-D-ribulos-1-ylimino)methylamino]-1-(5-phospho-beta-D-ribosyl)imidazole-4-carboxamide + L-glutamine = D-erythro-1-(imidazol-4-yl)glycerol 3-phosphate + 5-amino-1-(5-phospho-beta-D-ribosyl)imidazole-4-carboxamide + L-glutamate + H(+)</text>
        <dbReference type="Rhea" id="RHEA:24793"/>
        <dbReference type="ChEBI" id="CHEBI:15378"/>
        <dbReference type="ChEBI" id="CHEBI:29985"/>
        <dbReference type="ChEBI" id="CHEBI:58278"/>
        <dbReference type="ChEBI" id="CHEBI:58359"/>
        <dbReference type="ChEBI" id="CHEBI:58475"/>
        <dbReference type="ChEBI" id="CHEBI:58525"/>
        <dbReference type="EC" id="4.3.2.10"/>
    </reaction>
</comment>
<comment type="pathway">
    <text evidence="1">Amino-acid biosynthesis; L-histidine biosynthesis; L-histidine from 5-phospho-alpha-D-ribose 1-diphosphate: step 5/9.</text>
</comment>
<comment type="subunit">
    <text evidence="1">Heterodimer of HisH and HisF.</text>
</comment>
<comment type="subcellular location">
    <subcellularLocation>
        <location evidence="1">Cytoplasm</location>
    </subcellularLocation>
</comment>
<comment type="similarity">
    <text evidence="1">Belongs to the HisA/HisF family.</text>
</comment>
<proteinExistence type="inferred from homology"/>
<protein>
    <recommendedName>
        <fullName evidence="1">Imidazole glycerol phosphate synthase subunit HisF</fullName>
        <ecNumber evidence="1">4.3.2.10</ecNumber>
    </recommendedName>
    <alternativeName>
        <fullName evidence="1">IGP synthase cyclase subunit</fullName>
    </alternativeName>
    <alternativeName>
        <fullName evidence="1">IGP synthase subunit HisF</fullName>
    </alternativeName>
    <alternativeName>
        <fullName evidence="1">ImGP synthase subunit HisF</fullName>
        <shortName evidence="1">IGPS subunit HisF</shortName>
    </alternativeName>
</protein>
<dbReference type="EC" id="4.3.2.10" evidence="1"/>
<dbReference type="EMBL" id="CP001147">
    <property type="protein sequence ID" value="ACI20266.1"/>
    <property type="molecule type" value="Genomic_DNA"/>
</dbReference>
<dbReference type="RefSeq" id="WP_012545004.1">
    <property type="nucleotide sequence ID" value="NC_011296.1"/>
</dbReference>
<dbReference type="RefSeq" id="YP_002249748.1">
    <property type="nucleotide sequence ID" value="NC_011296.1"/>
</dbReference>
<dbReference type="SMR" id="B5YIB7"/>
<dbReference type="FunCoup" id="B5YIB7">
    <property type="interactions" value="451"/>
</dbReference>
<dbReference type="STRING" id="289376.THEYE_A1958"/>
<dbReference type="EnsemblBacteria" id="ACI20266">
    <property type="protein sequence ID" value="ACI20266"/>
    <property type="gene ID" value="THEYE_A1958"/>
</dbReference>
<dbReference type="KEGG" id="tye:THEYE_A1958"/>
<dbReference type="PATRIC" id="fig|289376.4.peg.1913"/>
<dbReference type="eggNOG" id="COG0107">
    <property type="taxonomic scope" value="Bacteria"/>
</dbReference>
<dbReference type="HOGENOM" id="CLU_048577_4_0_0"/>
<dbReference type="InParanoid" id="B5YIB7"/>
<dbReference type="OrthoDB" id="9781903at2"/>
<dbReference type="UniPathway" id="UPA00031">
    <property type="reaction ID" value="UER00010"/>
</dbReference>
<dbReference type="Proteomes" id="UP000000718">
    <property type="component" value="Chromosome"/>
</dbReference>
<dbReference type="GO" id="GO:0005737">
    <property type="term" value="C:cytoplasm"/>
    <property type="evidence" value="ECO:0007669"/>
    <property type="project" value="UniProtKB-SubCell"/>
</dbReference>
<dbReference type="GO" id="GO:0000107">
    <property type="term" value="F:imidazoleglycerol-phosphate synthase activity"/>
    <property type="evidence" value="ECO:0000318"/>
    <property type="project" value="GO_Central"/>
</dbReference>
<dbReference type="GO" id="GO:0016829">
    <property type="term" value="F:lyase activity"/>
    <property type="evidence" value="ECO:0007669"/>
    <property type="project" value="UniProtKB-KW"/>
</dbReference>
<dbReference type="GO" id="GO:0000105">
    <property type="term" value="P:L-histidine biosynthetic process"/>
    <property type="evidence" value="ECO:0007669"/>
    <property type="project" value="UniProtKB-UniRule"/>
</dbReference>
<dbReference type="CDD" id="cd04731">
    <property type="entry name" value="HisF"/>
    <property type="match status" value="1"/>
</dbReference>
<dbReference type="FunFam" id="3.20.20.70:FF:000006">
    <property type="entry name" value="Imidazole glycerol phosphate synthase subunit HisF"/>
    <property type="match status" value="1"/>
</dbReference>
<dbReference type="Gene3D" id="3.20.20.70">
    <property type="entry name" value="Aldolase class I"/>
    <property type="match status" value="1"/>
</dbReference>
<dbReference type="HAMAP" id="MF_01013">
    <property type="entry name" value="HisF"/>
    <property type="match status" value="1"/>
</dbReference>
<dbReference type="InterPro" id="IPR013785">
    <property type="entry name" value="Aldolase_TIM"/>
</dbReference>
<dbReference type="InterPro" id="IPR006062">
    <property type="entry name" value="His_biosynth"/>
</dbReference>
<dbReference type="InterPro" id="IPR004651">
    <property type="entry name" value="HisF"/>
</dbReference>
<dbReference type="InterPro" id="IPR050064">
    <property type="entry name" value="IGPS_HisA/HisF"/>
</dbReference>
<dbReference type="InterPro" id="IPR011060">
    <property type="entry name" value="RibuloseP-bd_barrel"/>
</dbReference>
<dbReference type="NCBIfam" id="TIGR00735">
    <property type="entry name" value="hisF"/>
    <property type="match status" value="1"/>
</dbReference>
<dbReference type="PANTHER" id="PTHR21235:SF2">
    <property type="entry name" value="IMIDAZOLE GLYCEROL PHOSPHATE SYNTHASE HISHF"/>
    <property type="match status" value="1"/>
</dbReference>
<dbReference type="PANTHER" id="PTHR21235">
    <property type="entry name" value="IMIDAZOLE GLYCEROL PHOSPHATE SYNTHASE SUBUNIT HISF/H IGP SYNTHASE SUBUNIT HISF/H"/>
    <property type="match status" value="1"/>
</dbReference>
<dbReference type="Pfam" id="PF00977">
    <property type="entry name" value="His_biosynth"/>
    <property type="match status" value="1"/>
</dbReference>
<dbReference type="SUPFAM" id="SSF51366">
    <property type="entry name" value="Ribulose-phoshate binding barrel"/>
    <property type="match status" value="1"/>
</dbReference>
<gene>
    <name evidence="1" type="primary">hisF</name>
    <name type="ordered locus">THEYE_A1958</name>
</gene>
<reference key="1">
    <citation type="submission" date="2008-08" db="EMBL/GenBank/DDBJ databases">
        <title>The complete genome sequence of Thermodesulfovibrio yellowstonii strain ATCC 51303 / DSM 11347 / YP87.</title>
        <authorList>
            <person name="Dodson R.J."/>
            <person name="Durkin A.S."/>
            <person name="Wu M."/>
            <person name="Eisen J."/>
            <person name="Sutton G."/>
        </authorList>
    </citation>
    <scope>NUCLEOTIDE SEQUENCE [LARGE SCALE GENOMIC DNA]</scope>
    <source>
        <strain>ATCC 51303 / DSM 11347 / YP87</strain>
    </source>
</reference>
<sequence>MLAKRIIPCLDVKDGRVVKGVNFLNLRDAGDPVENALYYNEEEADELVFLDVTASHEKRKIIIDVVERTASVVFMPLTVGGGIKSLDDIRDLLNAGADKVSINTTAVKDPYFIQKASTRFGSQCIVIAIDAKRVDKNFNPKAYPPESWFDDKELSDVLYKEDSRFVLSTHGGRLMRPIDAIAWAKKMEEFGAGEILLTSMDRDGTKEGYDIELTRAISEAVSIPVIASGGAGTLEHLYEAFAYAKADAALAASIFHFREYSIREAKEFLRQKGIPVRI</sequence>
<evidence type="ECO:0000255" key="1">
    <source>
        <dbReference type="HAMAP-Rule" id="MF_01013"/>
    </source>
</evidence>
<keyword id="KW-0028">Amino-acid biosynthesis</keyword>
<keyword id="KW-0963">Cytoplasm</keyword>
<keyword id="KW-0368">Histidine biosynthesis</keyword>
<keyword id="KW-0456">Lyase</keyword>
<keyword id="KW-1185">Reference proteome</keyword>